<comment type="function">
    <text evidence="1">Required for the first step of histidine biosynthesis. May allow the feedback regulation of ATP phosphoribosyltransferase activity by histidine.</text>
</comment>
<comment type="pathway">
    <text evidence="1">Amino-acid biosynthesis; L-histidine biosynthesis; L-histidine from 5-phospho-alpha-D-ribose 1-diphosphate: step 1/9.</text>
</comment>
<comment type="subunit">
    <text evidence="1">Heteromultimer composed of HisG and HisZ subunits.</text>
</comment>
<comment type="subcellular location">
    <subcellularLocation>
        <location evidence="1">Cytoplasm</location>
    </subcellularLocation>
</comment>
<comment type="miscellaneous">
    <text>This function is generally fulfilled by the C-terminal part of HisG, which is missing in some bacteria such as this one.</text>
</comment>
<comment type="similarity">
    <text evidence="1">Belongs to the class-II aminoacyl-tRNA synthetase family. HisZ subfamily.</text>
</comment>
<reference key="1">
    <citation type="journal article" date="2006" name="Nat. Biotechnol.">
        <title>Complete genome of the mutualistic, N2-fixing grass endophyte Azoarcus sp. strain BH72.</title>
        <authorList>
            <person name="Krause A."/>
            <person name="Ramakumar A."/>
            <person name="Bartels D."/>
            <person name="Battistoni F."/>
            <person name="Bekel T."/>
            <person name="Boch J."/>
            <person name="Boehm M."/>
            <person name="Friedrich F."/>
            <person name="Hurek T."/>
            <person name="Krause L."/>
            <person name="Linke B."/>
            <person name="McHardy A.C."/>
            <person name="Sarkar A."/>
            <person name="Schneiker S."/>
            <person name="Syed A.A."/>
            <person name="Thauer R."/>
            <person name="Vorhoelter F.-J."/>
            <person name="Weidner S."/>
            <person name="Puehler A."/>
            <person name="Reinhold-Hurek B."/>
            <person name="Kaiser O."/>
            <person name="Goesmann A."/>
        </authorList>
    </citation>
    <scope>NUCLEOTIDE SEQUENCE [LARGE SCALE GENOMIC DNA]</scope>
    <source>
        <strain>BH72</strain>
    </source>
</reference>
<evidence type="ECO:0000255" key="1">
    <source>
        <dbReference type="HAMAP-Rule" id="MF_00125"/>
    </source>
</evidence>
<gene>
    <name evidence="1" type="primary">hisZ</name>
    <name type="ordered locus">azo0937</name>
</gene>
<keyword id="KW-0028">Amino-acid biosynthesis</keyword>
<keyword id="KW-0963">Cytoplasm</keyword>
<keyword id="KW-0368">Histidine biosynthesis</keyword>
<keyword id="KW-1185">Reference proteome</keyword>
<protein>
    <recommendedName>
        <fullName evidence="1">ATP phosphoribosyltransferase regulatory subunit</fullName>
    </recommendedName>
</protein>
<name>HISZ_AZOSB</name>
<organism>
    <name type="scientific">Azoarcus sp. (strain BH72)</name>
    <dbReference type="NCBI Taxonomy" id="418699"/>
    <lineage>
        <taxon>Bacteria</taxon>
        <taxon>Pseudomonadati</taxon>
        <taxon>Pseudomonadota</taxon>
        <taxon>Betaproteobacteria</taxon>
        <taxon>Rhodocyclales</taxon>
        <taxon>Zoogloeaceae</taxon>
        <taxon>Azoarcus</taxon>
    </lineage>
</organism>
<dbReference type="EMBL" id="AM406670">
    <property type="protein sequence ID" value="CAL93554.1"/>
    <property type="molecule type" value="Genomic_DNA"/>
</dbReference>
<dbReference type="RefSeq" id="WP_011764671.1">
    <property type="nucleotide sequence ID" value="NC_008702.1"/>
</dbReference>
<dbReference type="SMR" id="A1K3Z9"/>
<dbReference type="STRING" id="62928.azo0937"/>
<dbReference type="KEGG" id="azo:azo0937"/>
<dbReference type="eggNOG" id="COG3705">
    <property type="taxonomic scope" value="Bacteria"/>
</dbReference>
<dbReference type="HOGENOM" id="CLU_025113_0_1_4"/>
<dbReference type="UniPathway" id="UPA00031">
    <property type="reaction ID" value="UER00006"/>
</dbReference>
<dbReference type="Proteomes" id="UP000002588">
    <property type="component" value="Chromosome"/>
</dbReference>
<dbReference type="GO" id="GO:0005737">
    <property type="term" value="C:cytoplasm"/>
    <property type="evidence" value="ECO:0007669"/>
    <property type="project" value="UniProtKB-SubCell"/>
</dbReference>
<dbReference type="GO" id="GO:0000105">
    <property type="term" value="P:L-histidine biosynthetic process"/>
    <property type="evidence" value="ECO:0007669"/>
    <property type="project" value="UniProtKB-UniRule"/>
</dbReference>
<dbReference type="CDD" id="cd00773">
    <property type="entry name" value="HisRS-like_core"/>
    <property type="match status" value="1"/>
</dbReference>
<dbReference type="Gene3D" id="3.30.930.10">
    <property type="entry name" value="Bira Bifunctional Protein, Domain 2"/>
    <property type="match status" value="1"/>
</dbReference>
<dbReference type="HAMAP" id="MF_00125">
    <property type="entry name" value="HisZ"/>
    <property type="match status" value="1"/>
</dbReference>
<dbReference type="InterPro" id="IPR045864">
    <property type="entry name" value="aa-tRNA-synth_II/BPL/LPL"/>
</dbReference>
<dbReference type="InterPro" id="IPR041715">
    <property type="entry name" value="HisRS-like_core"/>
</dbReference>
<dbReference type="InterPro" id="IPR004516">
    <property type="entry name" value="HisRS/HisZ"/>
</dbReference>
<dbReference type="InterPro" id="IPR004517">
    <property type="entry name" value="HisZ"/>
</dbReference>
<dbReference type="NCBIfam" id="TIGR00443">
    <property type="entry name" value="hisZ_biosyn_reg"/>
    <property type="match status" value="1"/>
</dbReference>
<dbReference type="NCBIfam" id="NF008935">
    <property type="entry name" value="PRK12292.1-1"/>
    <property type="match status" value="1"/>
</dbReference>
<dbReference type="NCBIfam" id="NF009086">
    <property type="entry name" value="PRK12421.1"/>
    <property type="match status" value="1"/>
</dbReference>
<dbReference type="PANTHER" id="PTHR11476:SF7">
    <property type="entry name" value="HISTIDINE--TRNA LIGASE"/>
    <property type="match status" value="1"/>
</dbReference>
<dbReference type="PANTHER" id="PTHR11476">
    <property type="entry name" value="HISTIDYL-TRNA SYNTHETASE"/>
    <property type="match status" value="1"/>
</dbReference>
<dbReference type="Pfam" id="PF13393">
    <property type="entry name" value="tRNA-synt_His"/>
    <property type="match status" value="1"/>
</dbReference>
<dbReference type="PIRSF" id="PIRSF001549">
    <property type="entry name" value="His-tRNA_synth"/>
    <property type="match status" value="1"/>
</dbReference>
<dbReference type="SUPFAM" id="SSF55681">
    <property type="entry name" value="Class II aaRS and biotin synthetases"/>
    <property type="match status" value="1"/>
</dbReference>
<sequence length="384" mass="41075">MRWVLPDHIQDALPSEAASLEALRRRLLDAFRVRGYQLVMPPLLEYLDSLTTGAGQDLKLRTFKLVDQVSGRTMGVRADMTPQVTRIDAHLLNRAGVSRLCYCGSVLHTLPSTLTATREPLQLGAELYGHAGIDADIEIVRLLADVLRLAEVPASRIDIGHVGLFHALAALAGMVPEREEELFDLLQAKDVPGLKEITVGVAEPVRTALLRLPALYGGAEVIDEAAACMPESAEIRAALDDLRRLAAALEDLPISFDLADLRGYHYHSGVVFAAYGGGSPAALALGGRYDRVGEAFGRARPATGFSLDLRELALRLPAAVVPGAILAPLEGTAGLAAAVEALRAAGEAVMSRLPGHEGTWNDAGCDRQLVMRQGAWVVEPLQGE</sequence>
<proteinExistence type="inferred from homology"/>
<feature type="chain" id="PRO_1000016244" description="ATP phosphoribosyltransferase regulatory subunit">
    <location>
        <begin position="1"/>
        <end position="384"/>
    </location>
</feature>
<accession>A1K3Z9</accession>